<evidence type="ECO:0000255" key="1">
    <source>
        <dbReference type="HAMAP-Rule" id="MF_00432"/>
    </source>
</evidence>
<feature type="chain" id="PRO_0000216412" description="Cytochrome b6-f complex subunit 5">
    <location>
        <begin position="1"/>
        <end position="39"/>
    </location>
</feature>
<feature type="transmembrane region" description="Helical" evidence="1">
    <location>
        <begin position="5"/>
        <end position="25"/>
    </location>
</feature>
<comment type="function">
    <text evidence="1">Component of the cytochrome b6-f complex, which mediates electron transfer between photosystem II (PSII) and photosystem I (PSI), cyclic electron flow around PSI, and state transitions. PetG is required for either the stability or assembly of the cytochrome b6-f complex.</text>
</comment>
<comment type="subunit">
    <text evidence="1">The 4 large subunits of the cytochrome b6-f complex are cytochrome b6, subunit IV (17 kDa polypeptide, PetD), cytochrome f and the Rieske protein, while the 4 small subunits are PetG, PetL, PetM and PetN. The complex functions as a dimer.</text>
</comment>
<comment type="subcellular location">
    <subcellularLocation>
        <location evidence="1">Cellular thylakoid membrane</location>
        <topology evidence="1">Single-pass membrane protein</topology>
    </subcellularLocation>
</comment>
<comment type="similarity">
    <text evidence="1">Belongs to the PetG family.</text>
</comment>
<name>PETG_PROMA</name>
<proteinExistence type="inferred from homology"/>
<accession>Q7VBF3</accession>
<gene>
    <name evidence="1" type="primary">petG</name>
    <name type="ordered locus">Pro_1142</name>
</gene>
<protein>
    <recommendedName>
        <fullName evidence="1">Cytochrome b6-f complex subunit 5</fullName>
    </recommendedName>
    <alternativeName>
        <fullName evidence="1">Cytochrome b6-f complex subunit PetG</fullName>
    </alternativeName>
    <alternativeName>
        <fullName evidence="1">Cytochrome b6-f complex subunit V</fullName>
    </alternativeName>
</protein>
<sequence length="39" mass="4326">MIEPLLCGIVLGLVPITLLGLFVAAWNQYRRGSAIPDWE</sequence>
<dbReference type="EMBL" id="AE017126">
    <property type="protein sequence ID" value="AAQ00187.1"/>
    <property type="molecule type" value="Genomic_DNA"/>
</dbReference>
<dbReference type="RefSeq" id="NP_875534.1">
    <property type="nucleotide sequence ID" value="NC_005042.1"/>
</dbReference>
<dbReference type="RefSeq" id="WP_011125294.1">
    <property type="nucleotide sequence ID" value="NC_005042.1"/>
</dbReference>
<dbReference type="SMR" id="Q7VBF3"/>
<dbReference type="STRING" id="167539.Pro_1142"/>
<dbReference type="EnsemblBacteria" id="AAQ00187">
    <property type="protein sequence ID" value="AAQ00187"/>
    <property type="gene ID" value="Pro_1142"/>
</dbReference>
<dbReference type="KEGG" id="pma:Pro_1142"/>
<dbReference type="PATRIC" id="fig|167539.5.peg.1195"/>
<dbReference type="eggNOG" id="ENOG502ZI4F">
    <property type="taxonomic scope" value="Bacteria"/>
</dbReference>
<dbReference type="HOGENOM" id="CLU_216962_0_0_3"/>
<dbReference type="OrthoDB" id="428448at2"/>
<dbReference type="Proteomes" id="UP000001420">
    <property type="component" value="Chromosome"/>
</dbReference>
<dbReference type="GO" id="GO:0009512">
    <property type="term" value="C:cytochrome b6f complex"/>
    <property type="evidence" value="ECO:0007669"/>
    <property type="project" value="InterPro"/>
</dbReference>
<dbReference type="GO" id="GO:0031676">
    <property type="term" value="C:plasma membrane-derived thylakoid membrane"/>
    <property type="evidence" value="ECO:0007669"/>
    <property type="project" value="UniProtKB-SubCell"/>
</dbReference>
<dbReference type="GO" id="GO:0045158">
    <property type="term" value="F:electron transporter, transferring electrons within cytochrome b6/f complex of photosystem II activity"/>
    <property type="evidence" value="ECO:0007669"/>
    <property type="project" value="UniProtKB-UniRule"/>
</dbReference>
<dbReference type="GO" id="GO:0017004">
    <property type="term" value="P:cytochrome complex assembly"/>
    <property type="evidence" value="ECO:0007669"/>
    <property type="project" value="UniProtKB-UniRule"/>
</dbReference>
<dbReference type="GO" id="GO:0015979">
    <property type="term" value="P:photosynthesis"/>
    <property type="evidence" value="ECO:0007669"/>
    <property type="project" value="UniProtKB-KW"/>
</dbReference>
<dbReference type="HAMAP" id="MF_00432">
    <property type="entry name" value="Cytb6_f_PetG"/>
    <property type="match status" value="1"/>
</dbReference>
<dbReference type="InterPro" id="IPR003683">
    <property type="entry name" value="Cyt_6/f_cplx_su5"/>
</dbReference>
<dbReference type="InterPro" id="IPR036099">
    <property type="entry name" value="Cyt_6/f_cplx_su5_sf"/>
</dbReference>
<dbReference type="NCBIfam" id="NF001907">
    <property type="entry name" value="PRK00665.1"/>
    <property type="match status" value="1"/>
</dbReference>
<dbReference type="Pfam" id="PF02529">
    <property type="entry name" value="PetG"/>
    <property type="match status" value="1"/>
</dbReference>
<dbReference type="PIRSF" id="PIRSF000034">
    <property type="entry name" value="Cyt_b6-f_V"/>
    <property type="match status" value="1"/>
</dbReference>
<dbReference type="SUPFAM" id="SSF103446">
    <property type="entry name" value="PetG subunit of the cytochrome b6f complex"/>
    <property type="match status" value="1"/>
</dbReference>
<organism>
    <name type="scientific">Prochlorococcus marinus (strain SARG / CCMP1375 / SS120)</name>
    <dbReference type="NCBI Taxonomy" id="167539"/>
    <lineage>
        <taxon>Bacteria</taxon>
        <taxon>Bacillati</taxon>
        <taxon>Cyanobacteriota</taxon>
        <taxon>Cyanophyceae</taxon>
        <taxon>Synechococcales</taxon>
        <taxon>Prochlorococcaceae</taxon>
        <taxon>Prochlorococcus</taxon>
    </lineage>
</organism>
<reference key="1">
    <citation type="journal article" date="2003" name="Proc. Natl. Acad. Sci. U.S.A.">
        <title>Genome sequence of the cyanobacterium Prochlorococcus marinus SS120, a nearly minimal oxyphototrophic genome.</title>
        <authorList>
            <person name="Dufresne A."/>
            <person name="Salanoubat M."/>
            <person name="Partensky F."/>
            <person name="Artiguenave F."/>
            <person name="Axmann I.M."/>
            <person name="Barbe V."/>
            <person name="Duprat S."/>
            <person name="Galperin M.Y."/>
            <person name="Koonin E.V."/>
            <person name="Le Gall F."/>
            <person name="Makarova K.S."/>
            <person name="Ostrowski M."/>
            <person name="Oztas S."/>
            <person name="Robert C."/>
            <person name="Rogozin I.B."/>
            <person name="Scanlan D.J."/>
            <person name="Tandeau de Marsac N."/>
            <person name="Weissenbach J."/>
            <person name="Wincker P."/>
            <person name="Wolf Y.I."/>
            <person name="Hess W.R."/>
        </authorList>
    </citation>
    <scope>NUCLEOTIDE SEQUENCE [LARGE SCALE GENOMIC DNA]</scope>
    <source>
        <strain>SARG / CCMP1375 / SS120</strain>
    </source>
</reference>
<keyword id="KW-0249">Electron transport</keyword>
<keyword id="KW-0472">Membrane</keyword>
<keyword id="KW-0602">Photosynthesis</keyword>
<keyword id="KW-1185">Reference proteome</keyword>
<keyword id="KW-0793">Thylakoid</keyword>
<keyword id="KW-0812">Transmembrane</keyword>
<keyword id="KW-1133">Transmembrane helix</keyword>
<keyword id="KW-0813">Transport</keyword>